<gene>
    <name evidence="1" type="primary">argH</name>
    <name type="ordered locus">SG2159</name>
</gene>
<accession>Q2NQZ1</accession>
<dbReference type="EC" id="4.3.2.1" evidence="1"/>
<dbReference type="EMBL" id="AP008232">
    <property type="protein sequence ID" value="BAE75434.1"/>
    <property type="molecule type" value="Genomic_DNA"/>
</dbReference>
<dbReference type="RefSeq" id="WP_011411971.1">
    <property type="nucleotide sequence ID" value="NC_007712.1"/>
</dbReference>
<dbReference type="SMR" id="Q2NQZ1"/>
<dbReference type="STRING" id="343509.SG2159"/>
<dbReference type="KEGG" id="sgl:SG2159"/>
<dbReference type="eggNOG" id="COG0165">
    <property type="taxonomic scope" value="Bacteria"/>
</dbReference>
<dbReference type="HOGENOM" id="CLU_027272_2_3_6"/>
<dbReference type="OrthoDB" id="9769623at2"/>
<dbReference type="UniPathway" id="UPA00068">
    <property type="reaction ID" value="UER00114"/>
</dbReference>
<dbReference type="Proteomes" id="UP000001932">
    <property type="component" value="Chromosome"/>
</dbReference>
<dbReference type="GO" id="GO:0005829">
    <property type="term" value="C:cytosol"/>
    <property type="evidence" value="ECO:0007669"/>
    <property type="project" value="TreeGrafter"/>
</dbReference>
<dbReference type="GO" id="GO:0004056">
    <property type="term" value="F:argininosuccinate lyase activity"/>
    <property type="evidence" value="ECO:0007669"/>
    <property type="project" value="UniProtKB-UniRule"/>
</dbReference>
<dbReference type="GO" id="GO:0042450">
    <property type="term" value="P:arginine biosynthetic process via ornithine"/>
    <property type="evidence" value="ECO:0007669"/>
    <property type="project" value="InterPro"/>
</dbReference>
<dbReference type="GO" id="GO:0006526">
    <property type="term" value="P:L-arginine biosynthetic process"/>
    <property type="evidence" value="ECO:0007669"/>
    <property type="project" value="UniProtKB-UniRule"/>
</dbReference>
<dbReference type="CDD" id="cd01359">
    <property type="entry name" value="Argininosuccinate_lyase"/>
    <property type="match status" value="1"/>
</dbReference>
<dbReference type="FunFam" id="1.10.40.30:FF:000001">
    <property type="entry name" value="Argininosuccinate lyase"/>
    <property type="match status" value="1"/>
</dbReference>
<dbReference type="FunFam" id="1.20.200.10:FF:000006">
    <property type="entry name" value="Argininosuccinate lyase"/>
    <property type="match status" value="1"/>
</dbReference>
<dbReference type="Gene3D" id="1.10.40.30">
    <property type="entry name" value="Fumarase/aspartase (C-terminal domain)"/>
    <property type="match status" value="1"/>
</dbReference>
<dbReference type="Gene3D" id="1.20.200.10">
    <property type="entry name" value="Fumarase/aspartase (Central domain)"/>
    <property type="match status" value="1"/>
</dbReference>
<dbReference type="Gene3D" id="1.10.275.10">
    <property type="entry name" value="Fumarase/aspartase (N-terminal domain)"/>
    <property type="match status" value="1"/>
</dbReference>
<dbReference type="HAMAP" id="MF_00006">
    <property type="entry name" value="Arg_succ_lyase"/>
    <property type="match status" value="1"/>
</dbReference>
<dbReference type="InterPro" id="IPR029419">
    <property type="entry name" value="Arg_succ_lyase_C"/>
</dbReference>
<dbReference type="InterPro" id="IPR009049">
    <property type="entry name" value="Argininosuccinate_lyase"/>
</dbReference>
<dbReference type="InterPro" id="IPR024083">
    <property type="entry name" value="Fumarase/histidase_N"/>
</dbReference>
<dbReference type="InterPro" id="IPR020557">
    <property type="entry name" value="Fumarate_lyase_CS"/>
</dbReference>
<dbReference type="InterPro" id="IPR000362">
    <property type="entry name" value="Fumarate_lyase_fam"/>
</dbReference>
<dbReference type="InterPro" id="IPR022761">
    <property type="entry name" value="Fumarate_lyase_N"/>
</dbReference>
<dbReference type="InterPro" id="IPR008948">
    <property type="entry name" value="L-Aspartase-like"/>
</dbReference>
<dbReference type="NCBIfam" id="TIGR00838">
    <property type="entry name" value="argH"/>
    <property type="match status" value="1"/>
</dbReference>
<dbReference type="NCBIfam" id="NF008964">
    <property type="entry name" value="PRK12308.1"/>
    <property type="match status" value="1"/>
</dbReference>
<dbReference type="PANTHER" id="PTHR43814">
    <property type="entry name" value="ARGININOSUCCINATE LYASE"/>
    <property type="match status" value="1"/>
</dbReference>
<dbReference type="PANTHER" id="PTHR43814:SF1">
    <property type="entry name" value="ARGININOSUCCINATE LYASE"/>
    <property type="match status" value="1"/>
</dbReference>
<dbReference type="Pfam" id="PF14698">
    <property type="entry name" value="ASL_C2"/>
    <property type="match status" value="1"/>
</dbReference>
<dbReference type="Pfam" id="PF00206">
    <property type="entry name" value="Lyase_1"/>
    <property type="match status" value="1"/>
</dbReference>
<dbReference type="PRINTS" id="PR00145">
    <property type="entry name" value="ARGSUCLYASE"/>
</dbReference>
<dbReference type="PRINTS" id="PR00149">
    <property type="entry name" value="FUMRATELYASE"/>
</dbReference>
<dbReference type="SUPFAM" id="SSF48557">
    <property type="entry name" value="L-aspartase-like"/>
    <property type="match status" value="1"/>
</dbReference>
<dbReference type="PROSITE" id="PS00163">
    <property type="entry name" value="FUMARATE_LYASES"/>
    <property type="match status" value="1"/>
</dbReference>
<comment type="catalytic activity">
    <reaction evidence="1">
        <text>2-(N(omega)-L-arginino)succinate = fumarate + L-arginine</text>
        <dbReference type="Rhea" id="RHEA:24020"/>
        <dbReference type="ChEBI" id="CHEBI:29806"/>
        <dbReference type="ChEBI" id="CHEBI:32682"/>
        <dbReference type="ChEBI" id="CHEBI:57472"/>
        <dbReference type="EC" id="4.3.2.1"/>
    </reaction>
</comment>
<comment type="pathway">
    <text evidence="1">Amino-acid biosynthesis; L-arginine biosynthesis; L-arginine from L-ornithine and carbamoyl phosphate: step 3/3.</text>
</comment>
<comment type="subcellular location">
    <subcellularLocation>
        <location evidence="1">Cytoplasm</location>
    </subcellularLocation>
</comment>
<comment type="similarity">
    <text evidence="1">Belongs to the lyase 1 family. Argininosuccinate lyase subfamily.</text>
</comment>
<reference key="1">
    <citation type="journal article" date="2006" name="Genome Res.">
        <title>Massive genome erosion and functional adaptations provide insights into the symbiotic lifestyle of Sodalis glossinidius in the tsetse host.</title>
        <authorList>
            <person name="Toh H."/>
            <person name="Weiss B.L."/>
            <person name="Perkin S.A.H."/>
            <person name="Yamashita A."/>
            <person name="Oshima K."/>
            <person name="Hattori M."/>
            <person name="Aksoy S."/>
        </authorList>
    </citation>
    <scope>NUCLEOTIDE SEQUENCE [LARGE SCALE GENOMIC DNA]</scope>
    <source>
        <strain>morsitans</strain>
    </source>
</reference>
<sequence length="457" mass="50152">MALWGGRFSQAADQRFKSFNDSLRFDYRLTEQDIVGSVAWSRALVTVGVLSETEQQQLEDALNVTLEEVRTAPEAILASDAEDIHSWVEQCLIDKVGDLGKKLHTGRSRNDQVATDLKLWCRAQVTELLGAIHLLQQALVMTAEAHQDVVMPGYTHLQRAQPITFAHWCLAYSEMLARDESRLRDTLTRLDVSPLGAGALAGTAYAIDRDKLAGWLGFASATRNSLDSVSDRDHVLELLSYAAIGMVHLSRFAEDLIFFNTGEAGFIELSDRVTSGSSLMPQKKNPDALELIRGKCGRVQGALTGMMMTLKGLPLAYNKDMQEDKEGLFDALDTWLDCLHMAALVLDGIQLKSPRCREAAQQGYANATELADYLVARGIPFREAHHIVGEAVVEAIRQGVPLETLPLARLQAFSPVIDEDVYPVLALASCLAQRKAKGGVAPEQIAQAIAEAKQRLA</sequence>
<protein>
    <recommendedName>
        <fullName evidence="1">Argininosuccinate lyase</fullName>
        <shortName evidence="1">ASAL</shortName>
        <ecNumber evidence="1">4.3.2.1</ecNumber>
    </recommendedName>
    <alternativeName>
        <fullName evidence="1">Arginosuccinase</fullName>
    </alternativeName>
</protein>
<name>ARLY_SODGM</name>
<feature type="chain" id="PRO_0000240772" description="Argininosuccinate lyase">
    <location>
        <begin position="1"/>
        <end position="457"/>
    </location>
</feature>
<keyword id="KW-0028">Amino-acid biosynthesis</keyword>
<keyword id="KW-0055">Arginine biosynthesis</keyword>
<keyword id="KW-0963">Cytoplasm</keyword>
<keyword id="KW-0456">Lyase</keyword>
<organism>
    <name type="scientific">Sodalis glossinidius (strain morsitans)</name>
    <dbReference type="NCBI Taxonomy" id="343509"/>
    <lineage>
        <taxon>Bacteria</taxon>
        <taxon>Pseudomonadati</taxon>
        <taxon>Pseudomonadota</taxon>
        <taxon>Gammaproteobacteria</taxon>
        <taxon>Enterobacterales</taxon>
        <taxon>Bruguierivoracaceae</taxon>
        <taxon>Sodalis</taxon>
    </lineage>
</organism>
<evidence type="ECO:0000255" key="1">
    <source>
        <dbReference type="HAMAP-Rule" id="MF_00006"/>
    </source>
</evidence>
<proteinExistence type="inferred from homology"/>